<keyword id="KW-0249">Electron transport</keyword>
<keyword id="KW-0285">Flavoprotein</keyword>
<keyword id="KW-0288">FMN</keyword>
<keyword id="KW-0408">Iron</keyword>
<keyword id="KW-0479">Metal-binding</keyword>
<keyword id="KW-0560">Oxidoreductase</keyword>
<keyword id="KW-0813">Transport</keyword>
<protein>
    <recommendedName>
        <fullName>Type A flavoprotein fprA</fullName>
        <ecNumber>1.-.-.-</ecNumber>
    </recommendedName>
    <alternativeName>
        <fullName>FMN protein fprA</fullName>
    </alternativeName>
    <alternativeName>
        <fullName>Flavoprotein A</fullName>
    </alternativeName>
</protein>
<reference key="1">
    <citation type="journal article" date="1993" name="Mol. Gen. Genet.">
        <title>Identification of a new class of nitrogen fixation genes in Rhodobacter capsulatus: a putative membrane complex involved in electron transport to nitrogenase.</title>
        <authorList>
            <person name="Schmehl M."/>
            <person name="Jahn A."/>
            <person name="Meyer zu Vilsendorf A."/>
            <person name="Hennecke S."/>
            <person name="Masepohl B."/>
            <person name="Schuppler M."/>
            <person name="Marxer M."/>
            <person name="Oelze J."/>
            <person name="Klipp W."/>
        </authorList>
    </citation>
    <scope>NUCLEOTIDE SEQUENCE [GENOMIC DNA]</scope>
    <source>
        <strain>B10S</strain>
    </source>
</reference>
<reference key="2">
    <citation type="journal article" date="1990" name="Nucleic Acids Res.">
        <title>The nucleotide sequence of a flavodoxin-like gene which precedes two ferredoxin genes in Rhodobacter capsulatus.</title>
        <authorList>
            <person name="Jouanneau Y."/>
            <person name="Richaud P."/>
            <person name="Grabau C."/>
        </authorList>
    </citation>
    <scope>NUCLEOTIDE SEQUENCE [GENOMIC DNA] OF 242-435</scope>
    <source>
        <strain>ATCC 33303 / B10</strain>
    </source>
</reference>
<reference key="3">
    <citation type="journal article" date="1998" name="Eur. J. Biochem.">
        <title>A family of flavoproteins in the domains Archaea and Bacteria.</title>
        <authorList>
            <person name="Wasserfallen A."/>
            <person name="Ragettli S."/>
            <person name="Jouanneau Y."/>
            <person name="Leisinger T."/>
        </authorList>
    </citation>
    <scope>CHARACTERIZATION</scope>
</reference>
<accession>P0CY93</accession>
<accession>P18607</accession>
<accession>Q52692</accession>
<accession>Q52717</accession>
<name>FPRA_RHOCA</name>
<organism>
    <name type="scientific">Rhodobacter capsulatus</name>
    <name type="common">Rhodopseudomonas capsulata</name>
    <dbReference type="NCBI Taxonomy" id="1061"/>
    <lineage>
        <taxon>Bacteria</taxon>
        <taxon>Pseudomonadati</taxon>
        <taxon>Pseudomonadota</taxon>
        <taxon>Alphaproteobacteria</taxon>
        <taxon>Rhodobacterales</taxon>
        <taxon>Rhodobacter group</taxon>
        <taxon>Rhodobacter</taxon>
    </lineage>
</organism>
<feature type="chain" id="PRO_0000216806" description="Type A flavoprotein fprA">
    <location>
        <begin position="1"/>
        <end position="435"/>
    </location>
</feature>
<feature type="domain" description="Flavodoxin-like" evidence="2">
    <location>
        <begin position="276"/>
        <end position="415"/>
    </location>
</feature>
<feature type="region of interest" description="Zinc metallo-hydrolase">
    <location>
        <begin position="48"/>
        <end position="228"/>
    </location>
</feature>
<feature type="binding site" evidence="1">
    <location>
        <position position="98"/>
    </location>
    <ligand>
        <name>Fe cation</name>
        <dbReference type="ChEBI" id="CHEBI:24875"/>
        <label>1</label>
    </ligand>
</feature>
<feature type="binding site" evidence="1">
    <location>
        <position position="100"/>
    </location>
    <ligand>
        <name>Fe cation</name>
        <dbReference type="ChEBI" id="CHEBI:24875"/>
        <label>1</label>
    </ligand>
</feature>
<feature type="binding site" evidence="1">
    <location>
        <position position="102"/>
    </location>
    <ligand>
        <name>Fe cation</name>
        <dbReference type="ChEBI" id="CHEBI:24875"/>
        <label>2</label>
    </ligand>
</feature>
<feature type="binding site" evidence="1">
    <location>
        <position position="167"/>
    </location>
    <ligand>
        <name>Fe cation</name>
        <dbReference type="ChEBI" id="CHEBI:24875"/>
        <label>1</label>
    </ligand>
</feature>
<feature type="binding site" evidence="1">
    <location>
        <position position="186"/>
    </location>
    <ligand>
        <name>Fe cation</name>
        <dbReference type="ChEBI" id="CHEBI:24875"/>
        <label>1</label>
    </ligand>
</feature>
<feature type="binding site" evidence="1">
    <location>
        <position position="186"/>
    </location>
    <ligand>
        <name>Fe cation</name>
        <dbReference type="ChEBI" id="CHEBI:24875"/>
        <label>2</label>
    </ligand>
</feature>
<feature type="binding site" evidence="1">
    <location>
        <position position="243"/>
    </location>
    <ligand>
        <name>Fe cation</name>
        <dbReference type="ChEBI" id="CHEBI:24875"/>
        <label>2</label>
    </ligand>
</feature>
<feature type="sequence variant" description="In strain: ATCC 33303 / B10.">
    <original>W</original>
    <variation>R</variation>
    <location>
        <position position="265"/>
    </location>
</feature>
<feature type="sequence variant" description="In strain: ATCC 33303 / B10.">
    <original>R</original>
    <variation>A</variation>
    <location>
        <position position="285"/>
    </location>
</feature>
<feature type="sequence variant" description="In strain: ATCC 33303 / B10.">
    <original>QL</original>
    <variation>HV</variation>
    <location>
        <begin position="289"/>
        <end position="290"/>
    </location>
</feature>
<feature type="sequence variant" description="In strain: ATCC 33303 / B10.">
    <original>R</original>
    <variation>A</variation>
    <location>
        <position position="423"/>
    </location>
</feature>
<sequence>MSVPPFTIRPAAPRLDGPTGPVAVAPGVHWVGALDPGLRNFDVILKTANGTTYNAYAVRGSEGVAVIDTVKAEFAGDFFARLEAVARYDEIRLIVLNHLEPDHTGAVPELLRRAPQAQVRLSPRGLPMLRALLKDDFERYDIKGVTTGQSVSLGDRICSFFTTPFVHWPDTQCTWLAAERVLFTCDLFGSHYCDGRLFNDLVGDFRFSFEYYFDRIMRPFRSFVAQVLDLIEPLDFGIIAPAHGPILRSHPRDYLTHTRRLISSWLAAETGSEKTLLIFYVSAYRATAQLAQAIHDGAAESPDVRVSLFDLEGGEITPFLDLIEEADGIALGTPTINGDAVRTIWEMLAALVDIETRGKLGAAFGSYGWSGEAVRLVETRLQGLKMRLPEPGLRVKLHPSAAELEEGRAFGRRLADHLTGRARPREVDFAEIAAR</sequence>
<gene>
    <name type="primary">fprA</name>
</gene>
<dbReference type="EC" id="1.-.-.-"/>
<dbReference type="EMBL" id="X72888">
    <property type="protein sequence ID" value="CAA51402.1"/>
    <property type="status" value="ALT_INIT"/>
    <property type="molecule type" value="Genomic_DNA"/>
</dbReference>
<dbReference type="EMBL" id="X54054">
    <property type="protein sequence ID" value="CAB37851.1"/>
    <property type="status" value="ALT_INIT"/>
    <property type="molecule type" value="Genomic_DNA"/>
</dbReference>
<dbReference type="PIR" id="S39896">
    <property type="entry name" value="S39896"/>
</dbReference>
<dbReference type="SMR" id="P0CY93"/>
<dbReference type="GO" id="GO:0009055">
    <property type="term" value="F:electron transfer activity"/>
    <property type="evidence" value="ECO:0007669"/>
    <property type="project" value="InterPro"/>
</dbReference>
<dbReference type="GO" id="GO:0010181">
    <property type="term" value="F:FMN binding"/>
    <property type="evidence" value="ECO:0007669"/>
    <property type="project" value="InterPro"/>
</dbReference>
<dbReference type="GO" id="GO:0046872">
    <property type="term" value="F:metal ion binding"/>
    <property type="evidence" value="ECO:0007669"/>
    <property type="project" value="UniProtKB-KW"/>
</dbReference>
<dbReference type="GO" id="GO:0016491">
    <property type="term" value="F:oxidoreductase activity"/>
    <property type="evidence" value="ECO:0007669"/>
    <property type="project" value="UniProtKB-KW"/>
</dbReference>
<dbReference type="CDD" id="cd07709">
    <property type="entry name" value="flavodiiron_proteins_MBL-fold"/>
    <property type="match status" value="1"/>
</dbReference>
<dbReference type="Gene3D" id="3.40.50.360">
    <property type="match status" value="1"/>
</dbReference>
<dbReference type="Gene3D" id="3.60.15.10">
    <property type="entry name" value="Ribonuclease Z/Hydroxyacylglutathione hydrolase-like"/>
    <property type="match status" value="1"/>
</dbReference>
<dbReference type="InterPro" id="IPR008254">
    <property type="entry name" value="Flavodoxin/NO_synth"/>
</dbReference>
<dbReference type="InterPro" id="IPR029039">
    <property type="entry name" value="Flavoprotein-like_sf"/>
</dbReference>
<dbReference type="InterPro" id="IPR001279">
    <property type="entry name" value="Metallo-B-lactamas"/>
</dbReference>
<dbReference type="InterPro" id="IPR045761">
    <property type="entry name" value="ODP_dom"/>
</dbReference>
<dbReference type="InterPro" id="IPR036866">
    <property type="entry name" value="RibonucZ/Hydroxyglut_hydro"/>
</dbReference>
<dbReference type="InterPro" id="IPR016440">
    <property type="entry name" value="Rubredoxin-O_OxRdtase"/>
</dbReference>
<dbReference type="PANTHER" id="PTHR43717">
    <property type="entry name" value="ANAEROBIC NITRIC OXIDE REDUCTASE FLAVORUBREDOXIN"/>
    <property type="match status" value="1"/>
</dbReference>
<dbReference type="PANTHER" id="PTHR43717:SF1">
    <property type="entry name" value="ANAEROBIC NITRIC OXIDE REDUCTASE FLAVORUBREDOXIN"/>
    <property type="match status" value="1"/>
</dbReference>
<dbReference type="Pfam" id="PF00258">
    <property type="entry name" value="Flavodoxin_1"/>
    <property type="match status" value="1"/>
</dbReference>
<dbReference type="Pfam" id="PF19583">
    <property type="entry name" value="ODP"/>
    <property type="match status" value="1"/>
</dbReference>
<dbReference type="PIRSF" id="PIRSF005243">
    <property type="entry name" value="ROO"/>
    <property type="match status" value="1"/>
</dbReference>
<dbReference type="SMART" id="SM00849">
    <property type="entry name" value="Lactamase_B"/>
    <property type="match status" value="1"/>
</dbReference>
<dbReference type="SUPFAM" id="SSF52218">
    <property type="entry name" value="Flavoproteins"/>
    <property type="match status" value="1"/>
</dbReference>
<dbReference type="SUPFAM" id="SSF56281">
    <property type="entry name" value="Metallo-hydrolase/oxidoreductase"/>
    <property type="match status" value="1"/>
</dbReference>
<dbReference type="PROSITE" id="PS50902">
    <property type="entry name" value="FLAVODOXIN_LIKE"/>
    <property type="match status" value="1"/>
</dbReference>
<proteinExistence type="evidence at protein level"/>
<evidence type="ECO:0000250" key="1"/>
<evidence type="ECO:0000255" key="2">
    <source>
        <dbReference type="PROSITE-ProRule" id="PRU00088"/>
    </source>
</evidence>
<evidence type="ECO:0000305" key="3"/>
<comment type="function">
    <text evidence="3">Low-potential electron donor to a number of redox enzymes.</text>
</comment>
<comment type="cofactor">
    <cofactor>
        <name>FMN</name>
        <dbReference type="ChEBI" id="CHEBI:58210"/>
    </cofactor>
    <text>Binds 1 FMN per monomer.</text>
</comment>
<comment type="cofactor">
    <cofactor>
        <name>Fe cation</name>
        <dbReference type="ChEBI" id="CHEBI:24875"/>
    </cofactor>
    <text>Binds 2 iron ions per subunit.</text>
</comment>
<comment type="subunit">
    <text evidence="3">Homodimer.</text>
</comment>
<comment type="similarity">
    <text evidence="3">In the N-terminal section; belongs to the zinc metallo-hydrolase group 3 family.</text>
</comment>
<comment type="sequence caution" evidence="3">
    <conflict type="erroneous initiation">
        <sequence resource="EMBL-CDS" id="CAA51402"/>
    </conflict>
    <text>Truncated N-terminus.</text>
</comment>
<comment type="sequence caution" evidence="3">
    <conflict type="erroneous initiation">
        <sequence resource="EMBL-CDS" id="CAB37851"/>
    </conflict>
    <text>Truncated N-terminus.</text>
</comment>